<name>DER_COXB2</name>
<keyword id="KW-0342">GTP-binding</keyword>
<keyword id="KW-0547">Nucleotide-binding</keyword>
<keyword id="KW-0677">Repeat</keyword>
<keyword id="KW-0690">Ribosome biogenesis</keyword>
<protein>
    <recommendedName>
        <fullName evidence="1">GTPase Der</fullName>
    </recommendedName>
    <alternativeName>
        <fullName evidence="1">GTP-binding protein EngA</fullName>
    </alternativeName>
</protein>
<dbReference type="EMBL" id="CP001019">
    <property type="protein sequence ID" value="ACJ18161.1"/>
    <property type="molecule type" value="Genomic_DNA"/>
</dbReference>
<dbReference type="RefSeq" id="WP_012569923.1">
    <property type="nucleotide sequence ID" value="NC_011527.1"/>
</dbReference>
<dbReference type="SMR" id="B6IZN3"/>
<dbReference type="KEGG" id="cbg:CbuG_0765"/>
<dbReference type="HOGENOM" id="CLU_016077_6_2_6"/>
<dbReference type="GO" id="GO:0005525">
    <property type="term" value="F:GTP binding"/>
    <property type="evidence" value="ECO:0007669"/>
    <property type="project" value="UniProtKB-UniRule"/>
</dbReference>
<dbReference type="GO" id="GO:0043022">
    <property type="term" value="F:ribosome binding"/>
    <property type="evidence" value="ECO:0007669"/>
    <property type="project" value="TreeGrafter"/>
</dbReference>
<dbReference type="GO" id="GO:0042254">
    <property type="term" value="P:ribosome biogenesis"/>
    <property type="evidence" value="ECO:0007669"/>
    <property type="project" value="UniProtKB-KW"/>
</dbReference>
<dbReference type="CDD" id="cd01894">
    <property type="entry name" value="EngA1"/>
    <property type="match status" value="1"/>
</dbReference>
<dbReference type="CDD" id="cd01895">
    <property type="entry name" value="EngA2"/>
    <property type="match status" value="1"/>
</dbReference>
<dbReference type="FunFam" id="3.30.300.20:FF:000004">
    <property type="entry name" value="GTPase Der"/>
    <property type="match status" value="1"/>
</dbReference>
<dbReference type="FunFam" id="3.40.50.300:FF:000040">
    <property type="entry name" value="GTPase Der"/>
    <property type="match status" value="1"/>
</dbReference>
<dbReference type="FunFam" id="3.40.50.300:FF:000057">
    <property type="entry name" value="GTPase Der"/>
    <property type="match status" value="1"/>
</dbReference>
<dbReference type="Gene3D" id="3.30.300.20">
    <property type="match status" value="1"/>
</dbReference>
<dbReference type="Gene3D" id="3.40.50.300">
    <property type="entry name" value="P-loop containing nucleotide triphosphate hydrolases"/>
    <property type="match status" value="2"/>
</dbReference>
<dbReference type="HAMAP" id="MF_00195">
    <property type="entry name" value="GTPase_Der"/>
    <property type="match status" value="1"/>
</dbReference>
<dbReference type="InterPro" id="IPR031166">
    <property type="entry name" value="G_ENGA"/>
</dbReference>
<dbReference type="InterPro" id="IPR006073">
    <property type="entry name" value="GTP-bd"/>
</dbReference>
<dbReference type="InterPro" id="IPR016484">
    <property type="entry name" value="GTPase_Der"/>
</dbReference>
<dbReference type="InterPro" id="IPR032859">
    <property type="entry name" value="KH_dom-like"/>
</dbReference>
<dbReference type="InterPro" id="IPR015946">
    <property type="entry name" value="KH_dom-like_a/b"/>
</dbReference>
<dbReference type="InterPro" id="IPR027417">
    <property type="entry name" value="P-loop_NTPase"/>
</dbReference>
<dbReference type="InterPro" id="IPR005225">
    <property type="entry name" value="Small_GTP-bd"/>
</dbReference>
<dbReference type="NCBIfam" id="TIGR03594">
    <property type="entry name" value="GTPase_EngA"/>
    <property type="match status" value="1"/>
</dbReference>
<dbReference type="NCBIfam" id="TIGR00231">
    <property type="entry name" value="small_GTP"/>
    <property type="match status" value="2"/>
</dbReference>
<dbReference type="PANTHER" id="PTHR43834">
    <property type="entry name" value="GTPASE DER"/>
    <property type="match status" value="1"/>
</dbReference>
<dbReference type="PANTHER" id="PTHR43834:SF6">
    <property type="entry name" value="GTPASE DER"/>
    <property type="match status" value="1"/>
</dbReference>
<dbReference type="Pfam" id="PF14714">
    <property type="entry name" value="KH_dom-like"/>
    <property type="match status" value="1"/>
</dbReference>
<dbReference type="Pfam" id="PF01926">
    <property type="entry name" value="MMR_HSR1"/>
    <property type="match status" value="2"/>
</dbReference>
<dbReference type="PIRSF" id="PIRSF006485">
    <property type="entry name" value="GTP-binding_EngA"/>
    <property type="match status" value="1"/>
</dbReference>
<dbReference type="PRINTS" id="PR00326">
    <property type="entry name" value="GTP1OBG"/>
</dbReference>
<dbReference type="SUPFAM" id="SSF52540">
    <property type="entry name" value="P-loop containing nucleoside triphosphate hydrolases"/>
    <property type="match status" value="2"/>
</dbReference>
<dbReference type="PROSITE" id="PS51712">
    <property type="entry name" value="G_ENGA"/>
    <property type="match status" value="2"/>
</dbReference>
<evidence type="ECO:0000255" key="1">
    <source>
        <dbReference type="HAMAP-Rule" id="MF_00195"/>
    </source>
</evidence>
<feature type="chain" id="PRO_1000099112" description="GTPase Der">
    <location>
        <begin position="1"/>
        <end position="443"/>
    </location>
</feature>
<feature type="domain" description="EngA-type G 1">
    <location>
        <begin position="3"/>
        <end position="167"/>
    </location>
</feature>
<feature type="domain" description="EngA-type G 2">
    <location>
        <begin position="176"/>
        <end position="349"/>
    </location>
</feature>
<feature type="domain" description="KH-like" evidence="1">
    <location>
        <begin position="350"/>
        <end position="434"/>
    </location>
</feature>
<feature type="binding site" evidence="1">
    <location>
        <begin position="9"/>
        <end position="16"/>
    </location>
    <ligand>
        <name>GTP</name>
        <dbReference type="ChEBI" id="CHEBI:37565"/>
        <label>1</label>
    </ligand>
</feature>
<feature type="binding site" evidence="1">
    <location>
        <begin position="56"/>
        <end position="60"/>
    </location>
    <ligand>
        <name>GTP</name>
        <dbReference type="ChEBI" id="CHEBI:37565"/>
        <label>1</label>
    </ligand>
</feature>
<feature type="binding site" evidence="1">
    <location>
        <begin position="119"/>
        <end position="122"/>
    </location>
    <ligand>
        <name>GTP</name>
        <dbReference type="ChEBI" id="CHEBI:37565"/>
        <label>1</label>
    </ligand>
</feature>
<feature type="binding site" evidence="1">
    <location>
        <begin position="182"/>
        <end position="189"/>
    </location>
    <ligand>
        <name>GTP</name>
        <dbReference type="ChEBI" id="CHEBI:37565"/>
        <label>2</label>
    </ligand>
</feature>
<feature type="binding site" evidence="1">
    <location>
        <begin position="229"/>
        <end position="233"/>
    </location>
    <ligand>
        <name>GTP</name>
        <dbReference type="ChEBI" id="CHEBI:37565"/>
        <label>2</label>
    </ligand>
</feature>
<feature type="binding site" evidence="1">
    <location>
        <begin position="294"/>
        <end position="297"/>
    </location>
    <ligand>
        <name>GTP</name>
        <dbReference type="ChEBI" id="CHEBI:37565"/>
        <label>2</label>
    </ligand>
</feature>
<sequence>MLPVIAIVGRPNVGKSTLFNYLTKSRAALVADVPGVTRDRQYGETTIDSQRLLLVDTGGLVDTENKEVAPLAETQVEQAIDESDCILFLVDAKAGLVPADEIIAERLHKKGKKIFLAVNKADRARAAVVQSDFYKLGFGEPYVIAAASGRGVKDLMTQVLENLPEEKEVIEKEVGIKIAMIGRPNVGKSTLINRLLGEERVIVYDQPGTTRDSIYIPFARNDENYTLIDTAGIRRRAKIQDYVEKFSMIKSLQAMHAADVVIFLLDARQGVTEQDLRLLNRIVEAGVSLIIAVNKWDGLNIEERDNVRNAIDRRMPFVDFARRYFISALHGTGVGKLFRAIQESYQSIQQELTTGQLTRALEKAVAEHEPPLVKGRRIRLRYAHLGARHPLTIVVHGKKTKSLPQSYSRYLANYFRKTFNFIGVPVHIKLKTDPNPYEGQEER</sequence>
<comment type="function">
    <text evidence="1">GTPase that plays an essential role in the late steps of ribosome biogenesis.</text>
</comment>
<comment type="subunit">
    <text evidence="1">Associates with the 50S ribosomal subunit.</text>
</comment>
<comment type="similarity">
    <text evidence="1">Belongs to the TRAFAC class TrmE-Era-EngA-EngB-Septin-like GTPase superfamily. EngA (Der) GTPase family.</text>
</comment>
<proteinExistence type="inferred from homology"/>
<reference key="1">
    <citation type="journal article" date="2009" name="Infect. Immun.">
        <title>Comparative genomics reveal extensive transposon-mediated genomic plasticity and diversity among potential effector proteins within the genus Coxiella.</title>
        <authorList>
            <person name="Beare P.A."/>
            <person name="Unsworth N."/>
            <person name="Andoh M."/>
            <person name="Voth D.E."/>
            <person name="Omsland A."/>
            <person name="Gilk S.D."/>
            <person name="Williams K.P."/>
            <person name="Sobral B.W."/>
            <person name="Kupko J.J. III"/>
            <person name="Porcella S.F."/>
            <person name="Samuel J.E."/>
            <person name="Heinzen R.A."/>
        </authorList>
    </citation>
    <scope>NUCLEOTIDE SEQUENCE [LARGE SCALE GENOMIC DNA]</scope>
    <source>
        <strain>CbuG_Q212</strain>
    </source>
</reference>
<accession>B6IZN3</accession>
<gene>
    <name evidence="1" type="primary">der</name>
    <name type="synonym">engA</name>
    <name type="ordered locus">CbuG_0765</name>
</gene>
<organism>
    <name type="scientific">Coxiella burnetii (strain CbuG_Q212)</name>
    <name type="common">Coxiella burnetii (strain Q212)</name>
    <dbReference type="NCBI Taxonomy" id="434923"/>
    <lineage>
        <taxon>Bacteria</taxon>
        <taxon>Pseudomonadati</taxon>
        <taxon>Pseudomonadota</taxon>
        <taxon>Gammaproteobacteria</taxon>
        <taxon>Legionellales</taxon>
        <taxon>Coxiellaceae</taxon>
        <taxon>Coxiella</taxon>
    </lineage>
</organism>